<organism>
    <name type="scientific">Rattus norvegicus</name>
    <name type="common">Rat</name>
    <dbReference type="NCBI Taxonomy" id="10116"/>
    <lineage>
        <taxon>Eukaryota</taxon>
        <taxon>Metazoa</taxon>
        <taxon>Chordata</taxon>
        <taxon>Craniata</taxon>
        <taxon>Vertebrata</taxon>
        <taxon>Euteleostomi</taxon>
        <taxon>Mammalia</taxon>
        <taxon>Eutheria</taxon>
        <taxon>Euarchontoglires</taxon>
        <taxon>Glires</taxon>
        <taxon>Rodentia</taxon>
        <taxon>Myomorpha</taxon>
        <taxon>Muroidea</taxon>
        <taxon>Muridae</taxon>
        <taxon>Murinae</taxon>
        <taxon>Rattus</taxon>
    </lineage>
</organism>
<keyword id="KW-1185">Reference proteome</keyword>
<dbReference type="EMBL" id="BC097357">
    <property type="protein sequence ID" value="AAH97357.1"/>
    <property type="molecule type" value="mRNA"/>
</dbReference>
<dbReference type="RefSeq" id="NP_001025087.1">
    <property type="nucleotide sequence ID" value="NM_001029916.1"/>
</dbReference>
<dbReference type="SMR" id="Q4QR86"/>
<dbReference type="FunCoup" id="Q4QR86">
    <property type="interactions" value="96"/>
</dbReference>
<dbReference type="STRING" id="10116.ENSRNOP00000016677"/>
<dbReference type="PhosphoSitePlus" id="Q4QR86"/>
<dbReference type="PaxDb" id="10116-ENSRNOP00000016677"/>
<dbReference type="Ensembl" id="ENSRNOT00000016677.6">
    <property type="protein sequence ID" value="ENSRNOP00000016677.4"/>
    <property type="gene ID" value="ENSRNOG00000012262.6"/>
</dbReference>
<dbReference type="GeneID" id="295971"/>
<dbReference type="KEGG" id="rno:295971"/>
<dbReference type="UCSC" id="RGD:1309720">
    <property type="organism name" value="rat"/>
</dbReference>
<dbReference type="AGR" id="RGD:1309720"/>
<dbReference type="CTD" id="91614"/>
<dbReference type="RGD" id="1309720">
    <property type="gene designation" value="Depdc7"/>
</dbReference>
<dbReference type="eggNOG" id="ENOG502QW4D">
    <property type="taxonomic scope" value="Eukaryota"/>
</dbReference>
<dbReference type="GeneTree" id="ENSGT00950000182976"/>
<dbReference type="HOGENOM" id="CLU_033776_1_0_1"/>
<dbReference type="InParanoid" id="Q4QR86"/>
<dbReference type="OMA" id="YCTRVSA"/>
<dbReference type="OrthoDB" id="276323at2759"/>
<dbReference type="PhylomeDB" id="Q4QR86"/>
<dbReference type="TreeFam" id="TF328365"/>
<dbReference type="PRO" id="PR:Q4QR86"/>
<dbReference type="Proteomes" id="UP000002494">
    <property type="component" value="Chromosome 3"/>
</dbReference>
<dbReference type="Bgee" id="ENSRNOG00000012262">
    <property type="expression patterns" value="Expressed in liver and 19 other cell types or tissues"/>
</dbReference>
<dbReference type="GO" id="GO:0035556">
    <property type="term" value="P:intracellular signal transduction"/>
    <property type="evidence" value="ECO:0007669"/>
    <property type="project" value="InterPro"/>
</dbReference>
<dbReference type="CDD" id="cd04446">
    <property type="entry name" value="DEP_DEPDC4"/>
    <property type="match status" value="1"/>
</dbReference>
<dbReference type="CDD" id="cd04405">
    <property type="entry name" value="RhoGAP_BRCC3-like"/>
    <property type="match status" value="1"/>
</dbReference>
<dbReference type="Gene3D" id="1.10.10.10">
    <property type="entry name" value="Winged helix-like DNA-binding domain superfamily/Winged helix DNA-binding domain"/>
    <property type="match status" value="1"/>
</dbReference>
<dbReference type="InterPro" id="IPR000591">
    <property type="entry name" value="DEP_dom"/>
</dbReference>
<dbReference type="InterPro" id="IPR036388">
    <property type="entry name" value="WH-like_DNA-bd_sf"/>
</dbReference>
<dbReference type="InterPro" id="IPR036390">
    <property type="entry name" value="WH_DNA-bd_sf"/>
</dbReference>
<dbReference type="PANTHER" id="PTHR16206">
    <property type="entry name" value="DEP DOMAIN-CONTAINING"/>
    <property type="match status" value="1"/>
</dbReference>
<dbReference type="PANTHER" id="PTHR16206:SF9">
    <property type="entry name" value="DEP DOMAIN-CONTAINING PROTEIN 7"/>
    <property type="match status" value="1"/>
</dbReference>
<dbReference type="Pfam" id="PF00610">
    <property type="entry name" value="DEP"/>
    <property type="match status" value="1"/>
</dbReference>
<dbReference type="SMART" id="SM00049">
    <property type="entry name" value="DEP"/>
    <property type="match status" value="1"/>
</dbReference>
<dbReference type="SUPFAM" id="SSF46785">
    <property type="entry name" value="Winged helix' DNA-binding domain"/>
    <property type="match status" value="1"/>
</dbReference>
<dbReference type="PROSITE" id="PS50186">
    <property type="entry name" value="DEP"/>
    <property type="match status" value="1"/>
</dbReference>
<name>DEPD7_RAT</name>
<reference key="1">
    <citation type="journal article" date="2004" name="Genome Res.">
        <title>The status, quality, and expansion of the NIH full-length cDNA project: the Mammalian Gene Collection (MGC).</title>
        <authorList>
            <consortium name="The MGC Project Team"/>
        </authorList>
    </citation>
    <scope>NUCLEOTIDE SEQUENCE [LARGE SCALE MRNA]</scope>
    <source>
        <tissue>Placenta</tissue>
    </source>
</reference>
<feature type="chain" id="PRO_0000307741" description="DEP domain-containing protein 7">
    <location>
        <begin position="1"/>
        <end position="511"/>
    </location>
</feature>
<feature type="domain" description="DEP" evidence="1">
    <location>
        <begin position="46"/>
        <end position="136"/>
    </location>
</feature>
<proteinExistence type="evidence at transcript level"/>
<protein>
    <recommendedName>
        <fullName>DEP domain-containing protein 7</fullName>
    </recommendedName>
</protein>
<evidence type="ECO:0000255" key="1">
    <source>
        <dbReference type="PROSITE-ProRule" id="PRU00066"/>
    </source>
</evidence>
<evidence type="ECO:0000305" key="2"/>
<gene>
    <name type="primary">Depdc7</name>
</gene>
<accession>Q4QR86</accession>
<sequence length="511" mass="58201">MATVREKAAALDLSALHSPAQRPPGFSVAQKPFGATYVWSSIINTLQTQVEVKKRRHHLKRHNDCFVGSEAVDVIYSHLTQNKFFGDVDIPRAKVVRVCQALMDYKVFEAVQTRVFGKDKKPAFEDSSCSLYRFTTIPNQDSQLGHENKGTSPSRFSDALFKSSDIKSDSLEDLWENLSLKPTNSPHVSTRLSPQVINEVWQEETIGRLLQLVDLPFLDSLLKQQEVVPKAPQSKRQPDMVNTSNYLDRGILRAYGDSQEDEWISAAIDCLEYLPDQMVVDISRNFPEQPDRTDLVKELLFGAIGKYYSTREPLLNHLSDVHNGIAELLVNGKTEIALEATQLFLKLLDSQNREEFRRLLYFMAVAADPSEFKLQEESDNRMVVKRVFSKAIVNNKNLSKGKTDLLVLFLMDHQKDVFKIPGTLHKIVSVKLLAIQKGRDPNKDTGYIYCQRIDGREYSSSIQKKTKDQLLSLLKTIDEDSKLSAKEKKKLLGQFHKSHPDIFIEYFGDSF</sequence>
<comment type="similarity">
    <text evidence="2">Belongs to the DEPDC7 family.</text>
</comment>